<organism>
    <name type="scientific">Caenorhabditis elegans</name>
    <dbReference type="NCBI Taxonomy" id="6239"/>
    <lineage>
        <taxon>Eukaryota</taxon>
        <taxon>Metazoa</taxon>
        <taxon>Ecdysozoa</taxon>
        <taxon>Nematoda</taxon>
        <taxon>Chromadorea</taxon>
        <taxon>Rhabditida</taxon>
        <taxon>Rhabditina</taxon>
        <taxon>Rhabditomorpha</taxon>
        <taxon>Rhabditoidea</taxon>
        <taxon>Rhabditidae</taxon>
        <taxon>Peloderinae</taxon>
        <taxon>Caenorhabditis</taxon>
    </lineage>
</organism>
<feature type="chain" id="PRO_0000223584" description="Nuclear hormone receptor family member nhr-91">
    <location>
        <begin position="1"/>
        <end position="474"/>
    </location>
</feature>
<feature type="domain" description="NR LBD" evidence="2">
    <location>
        <begin position="215"/>
        <end position="474"/>
    </location>
</feature>
<feature type="DNA-binding region" description="Nuclear receptor" evidence="1">
    <location>
        <begin position="97"/>
        <end position="172"/>
    </location>
</feature>
<feature type="zinc finger region" description="NR C4-type" evidence="1">
    <location>
        <begin position="100"/>
        <end position="120"/>
    </location>
</feature>
<feature type="zinc finger region" description="NR C4-type" evidence="1">
    <location>
        <begin position="136"/>
        <end position="155"/>
    </location>
</feature>
<feature type="region of interest" description="Disordered" evidence="3">
    <location>
        <begin position="50"/>
        <end position="69"/>
    </location>
</feature>
<feature type="compositionally biased region" description="Polar residues" evidence="3">
    <location>
        <begin position="51"/>
        <end position="69"/>
    </location>
</feature>
<feature type="splice variant" id="VSP_020168" description="In isoform b." evidence="4">
    <location>
        <begin position="1"/>
        <end position="164"/>
    </location>
</feature>
<gene>
    <name type="primary">nhr-91</name>
    <name type="ORF">Y15E3A.1</name>
</gene>
<keyword id="KW-0025">Alternative splicing</keyword>
<keyword id="KW-0238">DNA-binding</keyword>
<keyword id="KW-0479">Metal-binding</keyword>
<keyword id="KW-0539">Nucleus</keyword>
<keyword id="KW-0675">Receptor</keyword>
<keyword id="KW-1185">Reference proteome</keyword>
<keyword id="KW-0804">Transcription</keyword>
<keyword id="KW-0805">Transcription regulation</keyword>
<keyword id="KW-0862">Zinc</keyword>
<keyword id="KW-0863">Zinc-finger</keyword>
<comment type="function">
    <text>Orphan nuclear receptor.</text>
</comment>
<comment type="interaction">
    <interactant intactId="EBI-316939">
        <id>Q9U2R6</id>
    </interactant>
    <interactant intactId="EBI-316398">
        <id>P92004</id>
        <label>ifbp-1</label>
    </interactant>
    <organismsDiffer>false</organismsDiffer>
    <experiments>3</experiments>
</comment>
<comment type="interaction">
    <interactant intactId="EBI-316939">
        <id>Q9U2R6</id>
    </interactant>
    <interactant intactId="EBI-329613">
        <id>A0A5E4M3Q4</id>
        <label>syd-9</label>
    </interactant>
    <organismsDiffer>false</organismsDiffer>
    <experiments>4</experiments>
</comment>
<comment type="subcellular location">
    <subcellularLocation>
        <location evidence="1">Nucleus</location>
    </subcellularLocation>
</comment>
<comment type="alternative products">
    <event type="alternative splicing"/>
    <isoform>
        <id>Q9U2R6-1</id>
        <name>a</name>
        <sequence type="displayed"/>
    </isoform>
    <isoform>
        <id>Q9U2R6-2</id>
        <name>b</name>
        <sequence type="described" ref="VSP_020168"/>
    </isoform>
</comment>
<comment type="similarity">
    <text evidence="5">Belongs to the nuclear hormone receptor family.</text>
</comment>
<accession>Q9U2R6</accession>
<accession>Q6V7K9</accession>
<dbReference type="EMBL" id="AY349017">
    <property type="protein sequence ID" value="AAQ55497.1"/>
    <property type="molecule type" value="mRNA"/>
</dbReference>
<dbReference type="EMBL" id="AY349018">
    <property type="protein sequence ID" value="AAQ55498.1"/>
    <property type="molecule type" value="mRNA"/>
</dbReference>
<dbReference type="EMBL" id="AL132841">
    <property type="protein sequence ID" value="CAB60329.2"/>
    <property type="molecule type" value="Genomic_DNA"/>
</dbReference>
<dbReference type="EMBL" id="AL132841">
    <property type="protein sequence ID" value="CAI46629.1"/>
    <property type="molecule type" value="Genomic_DNA"/>
</dbReference>
<dbReference type="RefSeq" id="NP_001024953.1">
    <molecule id="Q9U2R6-1"/>
    <property type="nucleotide sequence ID" value="NM_001029782.6"/>
</dbReference>
<dbReference type="RefSeq" id="NP_001024954.1">
    <property type="nucleotide sequence ID" value="NM_001029783.4"/>
</dbReference>
<dbReference type="RefSeq" id="NP_001379437.1">
    <molecule id="Q9U2R6-2"/>
    <property type="nucleotide sequence ID" value="NM_001392897.1"/>
</dbReference>
<dbReference type="SMR" id="Q9U2R6"/>
<dbReference type="BioGRID" id="46518">
    <property type="interactions" value="15"/>
</dbReference>
<dbReference type="DIP" id="DIP-27347N"/>
<dbReference type="FunCoup" id="Q9U2R6">
    <property type="interactions" value="2"/>
</dbReference>
<dbReference type="IntAct" id="Q9U2R6">
    <property type="interactions" value="10"/>
</dbReference>
<dbReference type="MINT" id="Q9U2R6"/>
<dbReference type="STRING" id="6239.Y15E3A.1a.2"/>
<dbReference type="PaxDb" id="6239-Y15E3A.1a.2"/>
<dbReference type="EnsemblMetazoa" id="Y15E3A.1a.1">
    <molecule id="Q9U2R6-1"/>
    <property type="protein sequence ID" value="Y15E3A.1a.1"/>
    <property type="gene ID" value="WBGene00003681"/>
</dbReference>
<dbReference type="EnsemblMetazoa" id="Y15E3A.1a.2">
    <molecule id="Q9U2R6-1"/>
    <property type="protein sequence ID" value="Y15E3A.1a.2"/>
    <property type="gene ID" value="WBGene00003681"/>
</dbReference>
<dbReference type="EnsemblMetazoa" id="Y15E3A.1a.3">
    <molecule id="Q9U2R6-1"/>
    <property type="protein sequence ID" value="Y15E3A.1a.3"/>
    <property type="gene ID" value="WBGene00003681"/>
</dbReference>
<dbReference type="EnsemblMetazoa" id="Y15E3A.1a.4">
    <molecule id="Q9U2R6-1"/>
    <property type="protein sequence ID" value="Y15E3A.1a.4"/>
    <property type="gene ID" value="WBGene00003681"/>
</dbReference>
<dbReference type="EnsemblMetazoa" id="Y15E3A.1b.1">
    <molecule id="Q9U2R6-2"/>
    <property type="protein sequence ID" value="Y15E3A.1b.1"/>
    <property type="gene ID" value="WBGene00003681"/>
</dbReference>
<dbReference type="EnsemblMetazoa" id="Y15E3A.1b.2">
    <molecule id="Q9U2R6-2"/>
    <property type="protein sequence ID" value="Y15E3A.1b.2"/>
    <property type="gene ID" value="WBGene00003681"/>
</dbReference>
<dbReference type="GeneID" id="181621"/>
<dbReference type="KEGG" id="cel:CELE_Y15E3A.1"/>
<dbReference type="UCSC" id="Y15E3A.1b.3">
    <molecule id="Q9U2R6-1"/>
    <property type="organism name" value="c. elegans"/>
</dbReference>
<dbReference type="AGR" id="WB:WBGene00003681"/>
<dbReference type="CTD" id="181621"/>
<dbReference type="WormBase" id="Y15E3A.1a">
    <molecule id="Q9U2R6-1"/>
    <property type="protein sequence ID" value="CE27779"/>
    <property type="gene ID" value="WBGene00003681"/>
    <property type="gene designation" value="nhr-91"/>
</dbReference>
<dbReference type="WormBase" id="Y15E3A.1b">
    <molecule id="Q9U2R6-2"/>
    <property type="protein sequence ID" value="CE38001"/>
    <property type="gene ID" value="WBGene00003681"/>
    <property type="gene designation" value="nhr-91"/>
</dbReference>
<dbReference type="eggNOG" id="KOG3575">
    <property type="taxonomic scope" value="Eukaryota"/>
</dbReference>
<dbReference type="HOGENOM" id="CLU_001479_2_1_1"/>
<dbReference type="InParanoid" id="Q9U2R6"/>
<dbReference type="OMA" id="GYYACSV"/>
<dbReference type="OrthoDB" id="10006908at2759"/>
<dbReference type="PhylomeDB" id="Q9U2R6"/>
<dbReference type="Reactome" id="R-CEL-200425">
    <property type="pathway name" value="Carnitine shuttle"/>
</dbReference>
<dbReference type="Reactome" id="R-CEL-381340">
    <property type="pathway name" value="Transcriptional regulation of white adipocyte differentiation"/>
</dbReference>
<dbReference type="Reactome" id="R-CEL-383280">
    <property type="pathway name" value="Nuclear Receptor transcription pathway"/>
</dbReference>
<dbReference type="Reactome" id="R-CEL-400206">
    <property type="pathway name" value="Regulation of lipid metabolism by PPARalpha"/>
</dbReference>
<dbReference type="Reactome" id="R-CEL-4090294">
    <property type="pathway name" value="SUMOylation of intracellular receptors"/>
</dbReference>
<dbReference type="Reactome" id="R-CEL-5362517">
    <property type="pathway name" value="Signaling by Retinoic Acid"/>
</dbReference>
<dbReference type="Reactome" id="R-CEL-9616222">
    <property type="pathway name" value="Transcriptional regulation of granulopoiesis"/>
</dbReference>
<dbReference type="SignaLink" id="Q9U2R6"/>
<dbReference type="PRO" id="PR:Q9U2R6"/>
<dbReference type="Proteomes" id="UP000001940">
    <property type="component" value="Chromosome X"/>
</dbReference>
<dbReference type="Bgee" id="WBGene00003681">
    <property type="expression patterns" value="Expressed in pharyngeal muscle cell (C elegans) and 3 other cell types or tissues"/>
</dbReference>
<dbReference type="GO" id="GO:0005634">
    <property type="term" value="C:nucleus"/>
    <property type="evidence" value="ECO:0007669"/>
    <property type="project" value="UniProtKB-SubCell"/>
</dbReference>
<dbReference type="GO" id="GO:0004879">
    <property type="term" value="F:nuclear receptor activity"/>
    <property type="evidence" value="ECO:0000318"/>
    <property type="project" value="GO_Central"/>
</dbReference>
<dbReference type="GO" id="GO:0000978">
    <property type="term" value="F:RNA polymerase II cis-regulatory region sequence-specific DNA binding"/>
    <property type="evidence" value="ECO:0000318"/>
    <property type="project" value="GO_Central"/>
</dbReference>
<dbReference type="GO" id="GO:0008270">
    <property type="term" value="F:zinc ion binding"/>
    <property type="evidence" value="ECO:0007669"/>
    <property type="project" value="UniProtKB-KW"/>
</dbReference>
<dbReference type="GO" id="GO:0030154">
    <property type="term" value="P:cell differentiation"/>
    <property type="evidence" value="ECO:0000318"/>
    <property type="project" value="GO_Central"/>
</dbReference>
<dbReference type="GO" id="GO:0007399">
    <property type="term" value="P:nervous system development"/>
    <property type="evidence" value="ECO:0000318"/>
    <property type="project" value="GO_Central"/>
</dbReference>
<dbReference type="GO" id="GO:0006357">
    <property type="term" value="P:regulation of transcription by RNA polymerase II"/>
    <property type="evidence" value="ECO:0000318"/>
    <property type="project" value="GO_Central"/>
</dbReference>
<dbReference type="CDD" id="cd07168">
    <property type="entry name" value="NR_DBD_DHR4_like"/>
    <property type="match status" value="1"/>
</dbReference>
<dbReference type="CDD" id="cd06953">
    <property type="entry name" value="NR_LBD_DHR4_like"/>
    <property type="match status" value="1"/>
</dbReference>
<dbReference type="FunFam" id="1.10.565.10:FF:000065">
    <property type="entry name" value="Nuclear hormone receptor family member nhr-91"/>
    <property type="match status" value="1"/>
</dbReference>
<dbReference type="FunFam" id="3.30.50.10:FF:000037">
    <property type="entry name" value="Nuclear hormone receptor FTZ-F1 beta"/>
    <property type="match status" value="1"/>
</dbReference>
<dbReference type="Gene3D" id="3.30.50.10">
    <property type="entry name" value="Erythroid Transcription Factor GATA-1, subunit A"/>
    <property type="match status" value="1"/>
</dbReference>
<dbReference type="Gene3D" id="1.10.565.10">
    <property type="entry name" value="Retinoid X Receptor"/>
    <property type="match status" value="1"/>
</dbReference>
<dbReference type="InterPro" id="IPR035500">
    <property type="entry name" value="NHR-like_dom_sf"/>
</dbReference>
<dbReference type="InterPro" id="IPR000536">
    <property type="entry name" value="Nucl_hrmn_rcpt_lig-bd"/>
</dbReference>
<dbReference type="InterPro" id="IPR050200">
    <property type="entry name" value="Nuclear_hormone_rcpt_NR3"/>
</dbReference>
<dbReference type="InterPro" id="IPR001723">
    <property type="entry name" value="Nuclear_hrmn_rcpt"/>
</dbReference>
<dbReference type="InterPro" id="IPR001628">
    <property type="entry name" value="Znf_hrmn_rcpt"/>
</dbReference>
<dbReference type="InterPro" id="IPR013088">
    <property type="entry name" value="Znf_NHR/GATA"/>
</dbReference>
<dbReference type="PANTHER" id="PTHR48092">
    <property type="entry name" value="KNIRPS-RELATED PROTEIN-RELATED"/>
    <property type="match status" value="1"/>
</dbReference>
<dbReference type="Pfam" id="PF00104">
    <property type="entry name" value="Hormone_recep"/>
    <property type="match status" value="1"/>
</dbReference>
<dbReference type="Pfam" id="PF00105">
    <property type="entry name" value="zf-C4"/>
    <property type="match status" value="1"/>
</dbReference>
<dbReference type="PRINTS" id="PR00398">
    <property type="entry name" value="STRDHORMONER"/>
</dbReference>
<dbReference type="PRINTS" id="PR00047">
    <property type="entry name" value="STROIDFINGER"/>
</dbReference>
<dbReference type="SMART" id="SM00430">
    <property type="entry name" value="HOLI"/>
    <property type="match status" value="1"/>
</dbReference>
<dbReference type="SMART" id="SM00399">
    <property type="entry name" value="ZnF_C4"/>
    <property type="match status" value="1"/>
</dbReference>
<dbReference type="SUPFAM" id="SSF57716">
    <property type="entry name" value="Glucocorticoid receptor-like (DNA-binding domain)"/>
    <property type="match status" value="1"/>
</dbReference>
<dbReference type="SUPFAM" id="SSF48508">
    <property type="entry name" value="Nuclear receptor ligand-binding domain"/>
    <property type="match status" value="1"/>
</dbReference>
<dbReference type="PROSITE" id="PS51843">
    <property type="entry name" value="NR_LBD"/>
    <property type="match status" value="1"/>
</dbReference>
<dbReference type="PROSITE" id="PS00031">
    <property type="entry name" value="NUCLEAR_REC_DBD_1"/>
    <property type="match status" value="1"/>
</dbReference>
<dbReference type="PROSITE" id="PS51030">
    <property type="entry name" value="NUCLEAR_REC_DBD_2"/>
    <property type="match status" value="1"/>
</dbReference>
<sequence length="474" mass="53258">MDVADSTSETPPVFDHDNLALAAQTNLLQFYLTHLASTLVPPMKLDMRDSMTPSFSQTESPNSETDDSTSAANKVLFSILGTPTTDSTSNAVSKSSSKLCSVCGDKSTGLHYGAATCEGCKGFFKRSVQNKKVYHCSQDNCCEIDKQNRNRCQSCRFRKCISKGMLTEAVREDRMPGGRNGNSIYSNYKQRRSIIRKTKDYVEEQERRPFQSLPSGKKLIKELVEMDCLDRLINLKGLRINPSANCDIAPACKRLTRIGDEIVEQLVEWTKTLPFFDELPVEAHTHLLTQRWAELVLLSAGYYACSVFTPDSPDTTEMIDETDEISFTNPQVNLRLLQNRLSLVLGKEIPLEHVAKEAGPLVTRFTTLLHSFSNLKVSPEAYVCIKAITLLHLSADSTLDRSIIDKVNTLQDHFVKTLQIHLHQPGEDAQTTSLAQILDWLPDLRNASSVLLHSKMFYVPFLLCKNPRRLVFDE</sequence>
<protein>
    <recommendedName>
        <fullName>Nuclear hormone receptor family member nhr-91</fullName>
    </recommendedName>
</protein>
<evidence type="ECO:0000255" key="1">
    <source>
        <dbReference type="PROSITE-ProRule" id="PRU00407"/>
    </source>
</evidence>
<evidence type="ECO:0000255" key="2">
    <source>
        <dbReference type="PROSITE-ProRule" id="PRU01189"/>
    </source>
</evidence>
<evidence type="ECO:0000256" key="3">
    <source>
        <dbReference type="SAM" id="MobiDB-lite"/>
    </source>
</evidence>
<evidence type="ECO:0000303" key="4">
    <source>
    </source>
</evidence>
<evidence type="ECO:0000305" key="5"/>
<proteinExistence type="evidence at protein level"/>
<name>NHR91_CAEEL</name>
<reference key="1">
    <citation type="journal article" date="2004" name="Dev. Biol.">
        <title>Expression and function of conserved nuclear receptor genes in Caenorhabditis elegans.</title>
        <authorList>
            <person name="Gissendanner C.R."/>
            <person name="Crossgrove K."/>
            <person name="Kraus K.A."/>
            <person name="Maina C.V."/>
            <person name="Sluder A.E."/>
        </authorList>
    </citation>
    <scope>NUCLEOTIDE SEQUENCE [MRNA] (ISOFORMS A AND B)</scope>
    <source>
        <strain>Bristol N2</strain>
    </source>
</reference>
<reference key="2">
    <citation type="journal article" date="1998" name="Science">
        <title>Genome sequence of the nematode C. elegans: a platform for investigating biology.</title>
        <authorList>
            <consortium name="The C. elegans sequencing consortium"/>
        </authorList>
    </citation>
    <scope>NUCLEOTIDE SEQUENCE [LARGE SCALE GENOMIC DNA]</scope>
    <source>
        <strain>Bristol N2</strain>
    </source>
</reference>